<proteinExistence type="inferred from homology"/>
<reference key="1">
    <citation type="journal article" date="2002" name="J. Bacteriol.">
        <title>Whole-genome comparison of Mycobacterium tuberculosis clinical and laboratory strains.</title>
        <authorList>
            <person name="Fleischmann R.D."/>
            <person name="Alland D."/>
            <person name="Eisen J.A."/>
            <person name="Carpenter L."/>
            <person name="White O."/>
            <person name="Peterson J.D."/>
            <person name="DeBoy R.T."/>
            <person name="Dodson R.J."/>
            <person name="Gwinn M.L."/>
            <person name="Haft D.H."/>
            <person name="Hickey E.K."/>
            <person name="Kolonay J.F."/>
            <person name="Nelson W.C."/>
            <person name="Umayam L.A."/>
            <person name="Ermolaeva M.D."/>
            <person name="Salzberg S.L."/>
            <person name="Delcher A."/>
            <person name="Utterback T.R."/>
            <person name="Weidman J.F."/>
            <person name="Khouri H.M."/>
            <person name="Gill J."/>
            <person name="Mikula A."/>
            <person name="Bishai W."/>
            <person name="Jacobs W.R. Jr."/>
            <person name="Venter J.C."/>
            <person name="Fraser C.M."/>
        </authorList>
    </citation>
    <scope>NUCLEOTIDE SEQUENCE [LARGE SCALE GENOMIC DNA]</scope>
    <source>
        <strain>CDC 1551 / Oshkosh</strain>
    </source>
</reference>
<dbReference type="EMBL" id="AE000516">
    <property type="protein sequence ID" value="AAK46452.1"/>
    <property type="molecule type" value="Genomic_DNA"/>
</dbReference>
<dbReference type="PIR" id="H70511">
    <property type="entry name" value="H70511"/>
</dbReference>
<dbReference type="RefSeq" id="WP_003899174.1">
    <property type="nucleotide sequence ID" value="NZ_KK341227.1"/>
</dbReference>
<dbReference type="SMR" id="P9WHU0"/>
<dbReference type="KEGG" id="mtc:MT2169"/>
<dbReference type="PATRIC" id="fig|83331.31.peg.2339"/>
<dbReference type="HOGENOM" id="CLU_071031_0_0_11"/>
<dbReference type="UniPathway" id="UPA00997"/>
<dbReference type="Proteomes" id="UP000001020">
    <property type="component" value="Chromosome"/>
</dbReference>
<dbReference type="GO" id="GO:0005737">
    <property type="term" value="C:cytoplasm"/>
    <property type="evidence" value="ECO:0007669"/>
    <property type="project" value="UniProtKB-SubCell"/>
</dbReference>
<dbReference type="GO" id="GO:0019773">
    <property type="term" value="C:proteasome core complex, alpha-subunit complex"/>
    <property type="evidence" value="ECO:0007669"/>
    <property type="project" value="UniProtKB-UniRule"/>
</dbReference>
<dbReference type="GO" id="GO:0004298">
    <property type="term" value="F:threonine-type endopeptidase activity"/>
    <property type="evidence" value="ECO:0007669"/>
    <property type="project" value="InterPro"/>
</dbReference>
<dbReference type="GO" id="GO:0019941">
    <property type="term" value="P:modification-dependent protein catabolic process"/>
    <property type="evidence" value="ECO:0007669"/>
    <property type="project" value="UniProtKB-UniRule"/>
</dbReference>
<dbReference type="GO" id="GO:0010498">
    <property type="term" value="P:proteasomal protein catabolic process"/>
    <property type="evidence" value="ECO:0007669"/>
    <property type="project" value="UniProtKB-UniRule"/>
</dbReference>
<dbReference type="CDD" id="cd01906">
    <property type="entry name" value="proteasome_protease_HslV"/>
    <property type="match status" value="1"/>
</dbReference>
<dbReference type="FunFam" id="3.60.20.10:FF:000023">
    <property type="entry name" value="Proteasome subunit alpha"/>
    <property type="match status" value="1"/>
</dbReference>
<dbReference type="Gene3D" id="3.60.20.10">
    <property type="entry name" value="Glutamine Phosphoribosylpyrophosphate, subunit 1, domain 1"/>
    <property type="match status" value="1"/>
</dbReference>
<dbReference type="HAMAP" id="MF_00289_B">
    <property type="entry name" value="Proteasome_A_B"/>
    <property type="match status" value="1"/>
</dbReference>
<dbReference type="InterPro" id="IPR029055">
    <property type="entry name" value="Ntn_hydrolases_N"/>
</dbReference>
<dbReference type="InterPro" id="IPR050115">
    <property type="entry name" value="Proteasome_alpha"/>
</dbReference>
<dbReference type="InterPro" id="IPR023332">
    <property type="entry name" value="Proteasome_alpha-type"/>
</dbReference>
<dbReference type="InterPro" id="IPR022296">
    <property type="entry name" value="Proteasome_asu_bac"/>
</dbReference>
<dbReference type="InterPro" id="IPR001353">
    <property type="entry name" value="Proteasome_sua/b"/>
</dbReference>
<dbReference type="NCBIfam" id="TIGR03691">
    <property type="entry name" value="20S_bact_alpha"/>
    <property type="match status" value="1"/>
</dbReference>
<dbReference type="PANTHER" id="PTHR11599">
    <property type="entry name" value="PROTEASOME SUBUNIT ALPHA/BETA"/>
    <property type="match status" value="1"/>
</dbReference>
<dbReference type="Pfam" id="PF00227">
    <property type="entry name" value="Proteasome"/>
    <property type="match status" value="1"/>
</dbReference>
<dbReference type="SUPFAM" id="SSF56235">
    <property type="entry name" value="N-terminal nucleophile aminohydrolases (Ntn hydrolases)"/>
    <property type="match status" value="1"/>
</dbReference>
<dbReference type="PROSITE" id="PS51475">
    <property type="entry name" value="PROTEASOME_ALPHA_2"/>
    <property type="match status" value="1"/>
</dbReference>
<evidence type="ECO:0000250" key="1"/>
<evidence type="ECO:0000255" key="2">
    <source>
        <dbReference type="HAMAP-Rule" id="MF_00289"/>
    </source>
</evidence>
<keyword id="KW-0007">Acetylation</keyword>
<keyword id="KW-0963">Cytoplasm</keyword>
<keyword id="KW-0647">Proteasome</keyword>
<keyword id="KW-1185">Reference proteome</keyword>
<keyword id="KW-0843">Virulence</keyword>
<sequence>MSFPYFISPEQAMRERSELARKGIARAKSVVALAYAGGVLFVAENPSRSLQKISELYDRVGFAAAGKFNEFDNLRRGGIQFADTRGYAYDRRDVTGRQLANVYAQTLGTIFTEQAKPYEVELCVAEVAHYGETKPPELYRITYDGSIADEPHFVVMGGTTEPIANALKESYAENASLTDALRIAVAALRAGSADTSGGDQPTLGVASLEVAVLDANRPRRAFRRITGSALQALLVDQESPQSDGESSG</sequence>
<feature type="initiator methionine" description="Removed" evidence="1">
    <location>
        <position position="1"/>
    </location>
</feature>
<feature type="chain" id="PRO_0000428123" description="Proteasome subunit alpha">
    <location>
        <begin position="2"/>
        <end position="248"/>
    </location>
</feature>
<feature type="modified residue" description="N-acetylserine; partial" evidence="1">
    <location>
        <position position="2"/>
    </location>
</feature>
<accession>P9WHU0</accession>
<accession>L0T8P4</accession>
<accession>O33244</accession>
<accession>Q7D7I3</accession>
<name>PSA_MYCTO</name>
<organism>
    <name type="scientific">Mycobacterium tuberculosis (strain CDC 1551 / Oshkosh)</name>
    <dbReference type="NCBI Taxonomy" id="83331"/>
    <lineage>
        <taxon>Bacteria</taxon>
        <taxon>Bacillati</taxon>
        <taxon>Actinomycetota</taxon>
        <taxon>Actinomycetes</taxon>
        <taxon>Mycobacteriales</taxon>
        <taxon>Mycobacteriaceae</taxon>
        <taxon>Mycobacterium</taxon>
        <taxon>Mycobacterium tuberculosis complex</taxon>
    </lineage>
</organism>
<comment type="function">
    <text evidence="2">Component of the proteasome core, a large protease complex with broad specificity involved in protein degradation.</text>
</comment>
<comment type="activity regulation">
    <text evidence="2">The formation of the proteasomal ATPase ARC-20S proteasome complex, likely via the docking of the C-termini of ARC into the intersubunit pockets in the alpha-rings, may trigger opening of the gate for substrate entry. Interconversion between the open-gate and close-gate conformations leads to a dynamic regulation of the 20S proteasome proteolysis activity.</text>
</comment>
<comment type="pathway">
    <text evidence="2">Protein degradation; proteasomal Pup-dependent pathway.</text>
</comment>
<comment type="subunit">
    <text evidence="2">The 20S proteasome core is composed of 14 alpha and 14 beta subunits that assemble into four stacked heptameric rings, resulting in a barrel-shaped structure. The two inner rings, each composed of seven catalytic beta subunits, are sandwiched by two outer rings, each composed of seven alpha subunits. The catalytic chamber with the active sites is on the inside of the barrel. Has a gated structure, the ends of the cylinder being occluded by the N-termini of the alpha-subunits. Is capped by the proteasome-associated ATPase, ARC.</text>
</comment>
<comment type="subcellular location">
    <subcellularLocation>
        <location evidence="2">Cytoplasm</location>
    </subcellularLocation>
</comment>
<comment type="similarity">
    <text evidence="2">Belongs to the peptidase T1A family.</text>
</comment>
<gene>
    <name evidence="2" type="primary">prcA</name>
    <name type="ordered locus">MT2169</name>
</gene>
<protein>
    <recommendedName>
        <fullName evidence="2">Proteasome subunit alpha</fullName>
    </recommendedName>
    <alternativeName>
        <fullName evidence="2">20S proteasome alpha subunit</fullName>
    </alternativeName>
    <alternativeName>
        <fullName evidence="2">Proteasome core protein PrcA</fullName>
    </alternativeName>
</protein>